<reference key="1">
    <citation type="journal article" date="1998" name="Nature">
        <title>The genome sequence of Rickettsia prowazekii and the origin of mitochondria.</title>
        <authorList>
            <person name="Andersson S.G.E."/>
            <person name="Zomorodipour A."/>
            <person name="Andersson J.O."/>
            <person name="Sicheritz-Ponten T."/>
            <person name="Alsmark U.C.M."/>
            <person name="Podowski R.M."/>
            <person name="Naeslund A.K."/>
            <person name="Eriksson A.-S."/>
            <person name="Winkler H.H."/>
            <person name="Kurland C.G."/>
        </authorList>
    </citation>
    <scope>NUCLEOTIDE SEQUENCE [LARGE SCALE GENOMIC DNA]</scope>
    <source>
        <strain>Madrid E</strain>
    </source>
</reference>
<dbReference type="EMBL" id="AJ235272">
    <property type="protein sequence ID" value="CAA14942.1"/>
    <property type="molecule type" value="Genomic_DNA"/>
</dbReference>
<dbReference type="PIR" id="D71652">
    <property type="entry name" value="D71652"/>
</dbReference>
<dbReference type="RefSeq" id="NP_220866.1">
    <property type="nucleotide sequence ID" value="NC_000963.1"/>
</dbReference>
<dbReference type="RefSeq" id="WP_004597732.1">
    <property type="nucleotide sequence ID" value="NC_000963.1"/>
</dbReference>
<dbReference type="EnsemblBacteria" id="CAA14942">
    <property type="protein sequence ID" value="CAA14942"/>
    <property type="gene ID" value="CAA14942"/>
</dbReference>
<dbReference type="KEGG" id="rpr:RP489"/>
<dbReference type="PATRIC" id="fig|272947.5.peg.499"/>
<dbReference type="eggNOG" id="ENOG502ZDS1">
    <property type="taxonomic scope" value="Bacteria"/>
</dbReference>
<dbReference type="HOGENOM" id="CLU_966060_0_0_5"/>
<dbReference type="OrthoDB" id="7161054at2"/>
<dbReference type="Proteomes" id="UP000002480">
    <property type="component" value="Chromosome"/>
</dbReference>
<dbReference type="GO" id="GO:0005886">
    <property type="term" value="C:plasma membrane"/>
    <property type="evidence" value="ECO:0007669"/>
    <property type="project" value="UniProtKB-SubCell"/>
</dbReference>
<dbReference type="InterPro" id="IPR009574">
    <property type="entry name" value="DUF1189"/>
</dbReference>
<dbReference type="Pfam" id="PF06691">
    <property type="entry name" value="DUF1189"/>
    <property type="match status" value="1"/>
</dbReference>
<evidence type="ECO:0000255" key="1"/>
<evidence type="ECO:0000305" key="2"/>
<name>Y489_RICPR</name>
<sequence length="288" mass="33324">MYLLSFILGGLNTLLRQLRLSISSIDFYKDVYKNYQGYGIKYLFTLSFIPSIIYCIFILNYIITLKDYFNGTSSSKVTDNIEYIINQLPKIKYNNSKISVEEVEPIYLYSKNNNKIFVIDTKNQVSNQEKSKVPFVLEENKLKINLVSNTKKHFPSIVNYSEIFKQNEVILTPEIIKKYFADNLLYAPNLFIFFGTPVIILFWFVTFLLERSIIVLLVYGLANLLTTKTSIQTSIRLVMFSSGIPIILQPVIIILIPELSILIQLLQMFTTFLVFVAILQINKSLSHI</sequence>
<protein>
    <recommendedName>
        <fullName>Uncharacterized protein RP489</fullName>
    </recommendedName>
</protein>
<gene>
    <name type="ordered locus">RP489</name>
</gene>
<keyword id="KW-1003">Cell membrane</keyword>
<keyword id="KW-0472">Membrane</keyword>
<keyword id="KW-1185">Reference proteome</keyword>
<keyword id="KW-0812">Transmembrane</keyword>
<keyword id="KW-1133">Transmembrane helix</keyword>
<accession>Q9ZD57</accession>
<proteinExistence type="predicted"/>
<feature type="chain" id="PRO_0000101381" description="Uncharacterized protein RP489">
    <location>
        <begin position="1"/>
        <end position="288"/>
    </location>
</feature>
<feature type="transmembrane region" description="Helical" evidence="1">
    <location>
        <begin position="43"/>
        <end position="63"/>
    </location>
</feature>
<feature type="transmembrane region" description="Helical" evidence="1">
    <location>
        <begin position="190"/>
        <end position="210"/>
    </location>
</feature>
<feature type="transmembrane region" description="Helical" evidence="1">
    <location>
        <begin position="243"/>
        <end position="263"/>
    </location>
</feature>
<feature type="transmembrane region" description="Helical" evidence="1">
    <location>
        <begin position="265"/>
        <end position="285"/>
    </location>
</feature>
<organism>
    <name type="scientific">Rickettsia prowazekii (strain Madrid E)</name>
    <dbReference type="NCBI Taxonomy" id="272947"/>
    <lineage>
        <taxon>Bacteria</taxon>
        <taxon>Pseudomonadati</taxon>
        <taxon>Pseudomonadota</taxon>
        <taxon>Alphaproteobacteria</taxon>
        <taxon>Rickettsiales</taxon>
        <taxon>Rickettsiaceae</taxon>
        <taxon>Rickettsieae</taxon>
        <taxon>Rickettsia</taxon>
        <taxon>typhus group</taxon>
    </lineage>
</organism>
<comment type="subcellular location">
    <subcellularLocation>
        <location evidence="2">Cell membrane</location>
        <topology evidence="2">Multi-pass membrane protein</topology>
    </subcellularLocation>
</comment>